<protein>
    <recommendedName>
        <fullName evidence="1">UPF0235 protein YggU</fullName>
    </recommendedName>
</protein>
<feature type="chain" id="PRO_1000056786" description="UPF0235 protein YggU">
    <location>
        <begin position="1"/>
        <end position="96"/>
    </location>
</feature>
<name>YGGU_SALPA</name>
<accession>Q5PML0</accession>
<dbReference type="EMBL" id="CP000026">
    <property type="protein sequence ID" value="AAV78803.1"/>
    <property type="molecule type" value="Genomic_DNA"/>
</dbReference>
<dbReference type="RefSeq" id="WP_001277203.1">
    <property type="nucleotide sequence ID" value="NC_006511.1"/>
</dbReference>
<dbReference type="SMR" id="Q5PML0"/>
<dbReference type="GeneID" id="66757408"/>
<dbReference type="KEGG" id="spt:SPA2965"/>
<dbReference type="HOGENOM" id="CLU_130694_5_0_6"/>
<dbReference type="Proteomes" id="UP000008185">
    <property type="component" value="Chromosome"/>
</dbReference>
<dbReference type="GO" id="GO:0005737">
    <property type="term" value="C:cytoplasm"/>
    <property type="evidence" value="ECO:0007669"/>
    <property type="project" value="TreeGrafter"/>
</dbReference>
<dbReference type="Gene3D" id="3.30.1200.10">
    <property type="entry name" value="YggU-like"/>
    <property type="match status" value="1"/>
</dbReference>
<dbReference type="HAMAP" id="MF_00634">
    <property type="entry name" value="UPF0235"/>
    <property type="match status" value="1"/>
</dbReference>
<dbReference type="InterPro" id="IPR003746">
    <property type="entry name" value="DUF167"/>
</dbReference>
<dbReference type="InterPro" id="IPR036591">
    <property type="entry name" value="YggU-like_sf"/>
</dbReference>
<dbReference type="NCBIfam" id="TIGR00251">
    <property type="entry name" value="DUF167 family protein"/>
    <property type="match status" value="1"/>
</dbReference>
<dbReference type="NCBIfam" id="NF003466">
    <property type="entry name" value="PRK05090.1"/>
    <property type="match status" value="1"/>
</dbReference>
<dbReference type="PANTHER" id="PTHR13420">
    <property type="entry name" value="UPF0235 PROTEIN C15ORF40"/>
    <property type="match status" value="1"/>
</dbReference>
<dbReference type="PANTHER" id="PTHR13420:SF7">
    <property type="entry name" value="UPF0235 PROTEIN C15ORF40"/>
    <property type="match status" value="1"/>
</dbReference>
<dbReference type="Pfam" id="PF02594">
    <property type="entry name" value="DUF167"/>
    <property type="match status" value="1"/>
</dbReference>
<dbReference type="SMART" id="SM01152">
    <property type="entry name" value="DUF167"/>
    <property type="match status" value="1"/>
</dbReference>
<dbReference type="SUPFAM" id="SSF69786">
    <property type="entry name" value="YggU-like"/>
    <property type="match status" value="1"/>
</dbReference>
<reference key="1">
    <citation type="journal article" date="2004" name="Nat. Genet.">
        <title>Comparison of genome degradation in Paratyphi A and Typhi, human-restricted serovars of Salmonella enterica that cause typhoid.</title>
        <authorList>
            <person name="McClelland M."/>
            <person name="Sanderson K.E."/>
            <person name="Clifton S.W."/>
            <person name="Latreille P."/>
            <person name="Porwollik S."/>
            <person name="Sabo A."/>
            <person name="Meyer R."/>
            <person name="Bieri T."/>
            <person name="Ozersky P."/>
            <person name="McLellan M."/>
            <person name="Harkins C.R."/>
            <person name="Wang C."/>
            <person name="Nguyen C."/>
            <person name="Berghoff A."/>
            <person name="Elliott G."/>
            <person name="Kohlberg S."/>
            <person name="Strong C."/>
            <person name="Du F."/>
            <person name="Carter J."/>
            <person name="Kremizki C."/>
            <person name="Layman D."/>
            <person name="Leonard S."/>
            <person name="Sun H."/>
            <person name="Fulton L."/>
            <person name="Nash W."/>
            <person name="Miner T."/>
            <person name="Minx P."/>
            <person name="Delehaunty K."/>
            <person name="Fronick C."/>
            <person name="Magrini V."/>
            <person name="Nhan M."/>
            <person name="Warren W."/>
            <person name="Florea L."/>
            <person name="Spieth J."/>
            <person name="Wilson R.K."/>
        </authorList>
    </citation>
    <scope>NUCLEOTIDE SEQUENCE [LARGE SCALE GENOMIC DNA]</scope>
    <source>
        <strain>ATCC 9150 / SARB42</strain>
    </source>
</reference>
<proteinExistence type="inferred from homology"/>
<gene>
    <name evidence="1" type="primary">yggU</name>
    <name type="ordered locus">SPA2965</name>
</gene>
<evidence type="ECO:0000255" key="1">
    <source>
        <dbReference type="HAMAP-Rule" id="MF_00634"/>
    </source>
</evidence>
<organism>
    <name type="scientific">Salmonella paratyphi A (strain ATCC 9150 / SARB42)</name>
    <dbReference type="NCBI Taxonomy" id="295319"/>
    <lineage>
        <taxon>Bacteria</taxon>
        <taxon>Pseudomonadati</taxon>
        <taxon>Pseudomonadota</taxon>
        <taxon>Gammaproteobacteria</taxon>
        <taxon>Enterobacterales</taxon>
        <taxon>Enterobacteriaceae</taxon>
        <taxon>Salmonella</taxon>
    </lineage>
</organism>
<comment type="similarity">
    <text evidence="1">Belongs to the UPF0235 family.</text>
</comment>
<sequence>MSAVTRCEDGLVLRLYIQPKASRDSIVGLHGDEVKVAITAPPVDGQANSHLIKFLGKQFRVAKSQIVIEKGELGRHKQVKIIHPQQIPPEIAALTE</sequence>